<name>DDX1_DICDI</name>
<comment type="function">
    <text evidence="1">Acts as an ATP-dependent RNA helicase, able to unwind both RNA-RNA and RNA-DNA duplexes. Possesses 5' single-stranded RNA overhang nuclease activity (By similarity).</text>
</comment>
<comment type="catalytic activity">
    <reaction>
        <text>ATP + H2O = ADP + phosphate + H(+)</text>
        <dbReference type="Rhea" id="RHEA:13065"/>
        <dbReference type="ChEBI" id="CHEBI:15377"/>
        <dbReference type="ChEBI" id="CHEBI:15378"/>
        <dbReference type="ChEBI" id="CHEBI:30616"/>
        <dbReference type="ChEBI" id="CHEBI:43474"/>
        <dbReference type="ChEBI" id="CHEBI:456216"/>
        <dbReference type="EC" id="3.6.4.13"/>
    </reaction>
</comment>
<comment type="similarity">
    <text evidence="6">Belongs to the DEAD box helicase family. DDX1 subfamily.</text>
</comment>
<feature type="chain" id="PRO_0000327806" description="Probable ATP-dependent RNA helicase ddx1">
    <location>
        <begin position="1"/>
        <end position="765"/>
    </location>
</feature>
<feature type="domain" description="Helicase ATP-binding" evidence="2">
    <location>
        <begin position="33"/>
        <end position="453"/>
    </location>
</feature>
<feature type="domain" description="B30.2/SPRY" evidence="4">
    <location>
        <begin position="63"/>
        <end position="252"/>
    </location>
</feature>
<feature type="domain" description="Helicase C-terminal" evidence="3">
    <location>
        <begin position="512"/>
        <end position="715"/>
    </location>
</feature>
<feature type="region of interest" description="Disordered" evidence="5">
    <location>
        <begin position="78"/>
        <end position="101"/>
    </location>
</feature>
<feature type="region of interest" description="Disordered" evidence="5">
    <location>
        <begin position="275"/>
        <end position="320"/>
    </location>
</feature>
<feature type="short sequence motif" description="Q motif">
    <location>
        <begin position="2"/>
        <end position="30"/>
    </location>
</feature>
<feature type="short sequence motif" description="DEAD box">
    <location>
        <begin position="400"/>
        <end position="403"/>
    </location>
</feature>
<feature type="compositionally biased region" description="Gly residues" evidence="5">
    <location>
        <begin position="87"/>
        <end position="99"/>
    </location>
</feature>
<feature type="compositionally biased region" description="Low complexity" evidence="5">
    <location>
        <begin position="278"/>
        <end position="295"/>
    </location>
</feature>
<feature type="binding site" evidence="2">
    <location>
        <begin position="46"/>
        <end position="53"/>
    </location>
    <ligand>
        <name>ATP</name>
        <dbReference type="ChEBI" id="CHEBI:30616"/>
    </ligand>
</feature>
<proteinExistence type="inferred from homology"/>
<evidence type="ECO:0000250" key="1"/>
<evidence type="ECO:0000255" key="2">
    <source>
        <dbReference type="PROSITE-ProRule" id="PRU00541"/>
    </source>
</evidence>
<evidence type="ECO:0000255" key="3">
    <source>
        <dbReference type="PROSITE-ProRule" id="PRU00542"/>
    </source>
</evidence>
<evidence type="ECO:0000255" key="4">
    <source>
        <dbReference type="PROSITE-ProRule" id="PRU00548"/>
    </source>
</evidence>
<evidence type="ECO:0000256" key="5">
    <source>
        <dbReference type="SAM" id="MobiDB-lite"/>
    </source>
</evidence>
<evidence type="ECO:0000305" key="6"/>
<organism>
    <name type="scientific">Dictyostelium discoideum</name>
    <name type="common">Social amoeba</name>
    <dbReference type="NCBI Taxonomy" id="44689"/>
    <lineage>
        <taxon>Eukaryota</taxon>
        <taxon>Amoebozoa</taxon>
        <taxon>Evosea</taxon>
        <taxon>Eumycetozoa</taxon>
        <taxon>Dictyostelia</taxon>
        <taxon>Dictyosteliales</taxon>
        <taxon>Dictyosteliaceae</taxon>
        <taxon>Dictyostelium</taxon>
    </lineage>
</organism>
<protein>
    <recommendedName>
        <fullName>Probable ATP-dependent RNA helicase ddx1</fullName>
        <ecNumber>3.6.4.13</ecNumber>
    </recommendedName>
    <alternativeName>
        <fullName>DEAD box protein 1</fullName>
    </alternativeName>
</protein>
<keyword id="KW-0067">ATP-binding</keyword>
<keyword id="KW-0269">Exonuclease</keyword>
<keyword id="KW-0347">Helicase</keyword>
<keyword id="KW-0378">Hydrolase</keyword>
<keyword id="KW-0540">Nuclease</keyword>
<keyword id="KW-0547">Nucleotide-binding</keyword>
<keyword id="KW-1185">Reference proteome</keyword>
<keyword id="KW-0694">RNA-binding</keyword>
<gene>
    <name type="primary">ddx1</name>
    <name type="ORF">DDB_G0269966</name>
</gene>
<accession>Q55CP6</accession>
<reference key="1">
    <citation type="journal article" date="2005" name="Nature">
        <title>The genome of the social amoeba Dictyostelium discoideum.</title>
        <authorList>
            <person name="Eichinger L."/>
            <person name="Pachebat J.A."/>
            <person name="Gloeckner G."/>
            <person name="Rajandream M.A."/>
            <person name="Sucgang R."/>
            <person name="Berriman M."/>
            <person name="Song J."/>
            <person name="Olsen R."/>
            <person name="Szafranski K."/>
            <person name="Xu Q."/>
            <person name="Tunggal B."/>
            <person name="Kummerfeld S."/>
            <person name="Madera M."/>
            <person name="Konfortov B.A."/>
            <person name="Rivero F."/>
            <person name="Bankier A.T."/>
            <person name="Lehmann R."/>
            <person name="Hamlin N."/>
            <person name="Davies R."/>
            <person name="Gaudet P."/>
            <person name="Fey P."/>
            <person name="Pilcher K."/>
            <person name="Chen G."/>
            <person name="Saunders D."/>
            <person name="Sodergren E.J."/>
            <person name="Davis P."/>
            <person name="Kerhornou A."/>
            <person name="Nie X."/>
            <person name="Hall N."/>
            <person name="Anjard C."/>
            <person name="Hemphill L."/>
            <person name="Bason N."/>
            <person name="Farbrother P."/>
            <person name="Desany B."/>
            <person name="Just E."/>
            <person name="Morio T."/>
            <person name="Rost R."/>
            <person name="Churcher C.M."/>
            <person name="Cooper J."/>
            <person name="Haydock S."/>
            <person name="van Driessche N."/>
            <person name="Cronin A."/>
            <person name="Goodhead I."/>
            <person name="Muzny D.M."/>
            <person name="Mourier T."/>
            <person name="Pain A."/>
            <person name="Lu M."/>
            <person name="Harper D."/>
            <person name="Lindsay R."/>
            <person name="Hauser H."/>
            <person name="James K.D."/>
            <person name="Quiles M."/>
            <person name="Madan Babu M."/>
            <person name="Saito T."/>
            <person name="Buchrieser C."/>
            <person name="Wardroper A."/>
            <person name="Felder M."/>
            <person name="Thangavelu M."/>
            <person name="Johnson D."/>
            <person name="Knights A."/>
            <person name="Loulseged H."/>
            <person name="Mungall K.L."/>
            <person name="Oliver K."/>
            <person name="Price C."/>
            <person name="Quail M.A."/>
            <person name="Urushihara H."/>
            <person name="Hernandez J."/>
            <person name="Rabbinowitsch E."/>
            <person name="Steffen D."/>
            <person name="Sanders M."/>
            <person name="Ma J."/>
            <person name="Kohara Y."/>
            <person name="Sharp S."/>
            <person name="Simmonds M.N."/>
            <person name="Spiegler S."/>
            <person name="Tivey A."/>
            <person name="Sugano S."/>
            <person name="White B."/>
            <person name="Walker D."/>
            <person name="Woodward J.R."/>
            <person name="Winckler T."/>
            <person name="Tanaka Y."/>
            <person name="Shaulsky G."/>
            <person name="Schleicher M."/>
            <person name="Weinstock G.M."/>
            <person name="Rosenthal A."/>
            <person name="Cox E.C."/>
            <person name="Chisholm R.L."/>
            <person name="Gibbs R.A."/>
            <person name="Loomis W.F."/>
            <person name="Platzer M."/>
            <person name="Kay R.R."/>
            <person name="Williams J.G."/>
            <person name="Dear P.H."/>
            <person name="Noegel A.A."/>
            <person name="Barrell B.G."/>
            <person name="Kuspa A."/>
        </authorList>
    </citation>
    <scope>NUCLEOTIDE SEQUENCE [LARGE SCALE GENOMIC DNA]</scope>
    <source>
        <strain>AX4</strain>
    </source>
</reference>
<dbReference type="EC" id="3.6.4.13"/>
<dbReference type="EMBL" id="AAFI02000005">
    <property type="protein sequence ID" value="EAL72333.1"/>
    <property type="molecule type" value="Genomic_DNA"/>
</dbReference>
<dbReference type="RefSeq" id="XP_646435.1">
    <property type="nucleotide sequence ID" value="XM_641343.1"/>
</dbReference>
<dbReference type="SMR" id="Q55CP6"/>
<dbReference type="FunCoup" id="Q55CP6">
    <property type="interactions" value="366"/>
</dbReference>
<dbReference type="STRING" id="44689.Q55CP6"/>
<dbReference type="PaxDb" id="44689-DDB0233650"/>
<dbReference type="EnsemblProtists" id="EAL72333">
    <property type="protein sequence ID" value="EAL72333"/>
    <property type="gene ID" value="DDB_G0269966"/>
</dbReference>
<dbReference type="GeneID" id="8617394"/>
<dbReference type="KEGG" id="ddi:DDB_G0269966"/>
<dbReference type="dictyBase" id="DDB_G0269966">
    <property type="gene designation" value="ddx1"/>
</dbReference>
<dbReference type="VEuPathDB" id="AmoebaDB:DDB_G0269966"/>
<dbReference type="eggNOG" id="KOG0349">
    <property type="taxonomic scope" value="Eukaryota"/>
</dbReference>
<dbReference type="HOGENOM" id="CLU_016321_0_0_1"/>
<dbReference type="InParanoid" id="Q55CP6"/>
<dbReference type="OMA" id="KRQQVKF"/>
<dbReference type="PhylomeDB" id="Q55CP6"/>
<dbReference type="PRO" id="PR:Q55CP6"/>
<dbReference type="Proteomes" id="UP000002195">
    <property type="component" value="Chromosome 1"/>
</dbReference>
<dbReference type="GO" id="GO:0005634">
    <property type="term" value="C:nucleus"/>
    <property type="evidence" value="ECO:0000250"/>
    <property type="project" value="UniProtKB"/>
</dbReference>
<dbReference type="GO" id="GO:0005524">
    <property type="term" value="F:ATP binding"/>
    <property type="evidence" value="ECO:0007669"/>
    <property type="project" value="UniProtKB-KW"/>
</dbReference>
<dbReference type="GO" id="GO:0016887">
    <property type="term" value="F:ATP hydrolysis activity"/>
    <property type="evidence" value="ECO:0007669"/>
    <property type="project" value="RHEA"/>
</dbReference>
<dbReference type="GO" id="GO:0003682">
    <property type="term" value="F:chromatin binding"/>
    <property type="evidence" value="ECO:0000250"/>
    <property type="project" value="UniProtKB"/>
</dbReference>
<dbReference type="GO" id="GO:0033677">
    <property type="term" value="F:DNA/RNA helicase activity"/>
    <property type="evidence" value="ECO:0000250"/>
    <property type="project" value="UniProtKB"/>
</dbReference>
<dbReference type="GO" id="GO:0004527">
    <property type="term" value="F:exonuclease activity"/>
    <property type="evidence" value="ECO:0007669"/>
    <property type="project" value="UniProtKB-KW"/>
</dbReference>
<dbReference type="GO" id="GO:0004518">
    <property type="term" value="F:nuclease activity"/>
    <property type="evidence" value="ECO:0000250"/>
    <property type="project" value="UniProtKB"/>
</dbReference>
<dbReference type="GO" id="GO:0008143">
    <property type="term" value="F:poly(A) binding"/>
    <property type="evidence" value="ECO:0000250"/>
    <property type="project" value="UniProtKB"/>
</dbReference>
<dbReference type="GO" id="GO:0003724">
    <property type="term" value="F:RNA helicase activity"/>
    <property type="evidence" value="ECO:0000250"/>
    <property type="project" value="UniProtKB"/>
</dbReference>
<dbReference type="GO" id="GO:0003712">
    <property type="term" value="F:transcription coregulator activity"/>
    <property type="evidence" value="ECO:0000250"/>
    <property type="project" value="UniProtKB"/>
</dbReference>
<dbReference type="GO" id="GO:0006302">
    <property type="term" value="P:double-strand break repair"/>
    <property type="evidence" value="ECO:0000250"/>
    <property type="project" value="UniProtKB"/>
</dbReference>
<dbReference type="CDD" id="cd18787">
    <property type="entry name" value="SF2_C_DEAD"/>
    <property type="match status" value="1"/>
</dbReference>
<dbReference type="CDD" id="cd12873">
    <property type="entry name" value="SPRY_DDX1"/>
    <property type="match status" value="1"/>
</dbReference>
<dbReference type="FunFam" id="2.60.120.920:FF:000076">
    <property type="entry name" value="ATP-dependent RNA helicase DDX1"/>
    <property type="match status" value="1"/>
</dbReference>
<dbReference type="FunFam" id="3.40.50.300:FF:000708">
    <property type="entry name" value="ATP-dependent RNA helicase DDX1"/>
    <property type="match status" value="1"/>
</dbReference>
<dbReference type="Gene3D" id="2.60.120.920">
    <property type="match status" value="1"/>
</dbReference>
<dbReference type="Gene3D" id="3.40.50.300">
    <property type="entry name" value="P-loop containing nucleotide triphosphate hydrolases"/>
    <property type="match status" value="3"/>
</dbReference>
<dbReference type="InterPro" id="IPR001870">
    <property type="entry name" value="B30.2/SPRY"/>
</dbReference>
<dbReference type="InterPro" id="IPR043136">
    <property type="entry name" value="B30.2/SPRY_sf"/>
</dbReference>
<dbReference type="InterPro" id="IPR013320">
    <property type="entry name" value="ConA-like_dom_sf"/>
</dbReference>
<dbReference type="InterPro" id="IPR011545">
    <property type="entry name" value="DEAD/DEAH_box_helicase_dom"/>
</dbReference>
<dbReference type="InterPro" id="IPR014001">
    <property type="entry name" value="Helicase_ATP-bd"/>
</dbReference>
<dbReference type="InterPro" id="IPR001650">
    <property type="entry name" value="Helicase_C-like"/>
</dbReference>
<dbReference type="InterPro" id="IPR027417">
    <property type="entry name" value="P-loop_NTPase"/>
</dbReference>
<dbReference type="InterPro" id="IPR014014">
    <property type="entry name" value="RNA_helicase_DEAD_Q_motif"/>
</dbReference>
<dbReference type="InterPro" id="IPR003877">
    <property type="entry name" value="SPRY_dom"/>
</dbReference>
<dbReference type="PANTHER" id="PTHR24031">
    <property type="entry name" value="RNA HELICASE"/>
    <property type="match status" value="1"/>
</dbReference>
<dbReference type="Pfam" id="PF00270">
    <property type="entry name" value="DEAD"/>
    <property type="match status" value="2"/>
</dbReference>
<dbReference type="Pfam" id="PF00271">
    <property type="entry name" value="Helicase_C"/>
    <property type="match status" value="1"/>
</dbReference>
<dbReference type="Pfam" id="PF00622">
    <property type="entry name" value="SPRY"/>
    <property type="match status" value="1"/>
</dbReference>
<dbReference type="SMART" id="SM00487">
    <property type="entry name" value="DEXDc"/>
    <property type="match status" value="1"/>
</dbReference>
<dbReference type="SMART" id="SM00490">
    <property type="entry name" value="HELICc"/>
    <property type="match status" value="1"/>
</dbReference>
<dbReference type="SMART" id="SM00449">
    <property type="entry name" value="SPRY"/>
    <property type="match status" value="1"/>
</dbReference>
<dbReference type="SUPFAM" id="SSF49899">
    <property type="entry name" value="Concanavalin A-like lectins/glucanases"/>
    <property type="match status" value="1"/>
</dbReference>
<dbReference type="SUPFAM" id="SSF52540">
    <property type="entry name" value="P-loop containing nucleoside triphosphate hydrolases"/>
    <property type="match status" value="2"/>
</dbReference>
<dbReference type="PROSITE" id="PS50188">
    <property type="entry name" value="B302_SPRY"/>
    <property type="match status" value="1"/>
</dbReference>
<dbReference type="PROSITE" id="PS51192">
    <property type="entry name" value="HELICASE_ATP_BIND_1"/>
    <property type="match status" value="2"/>
</dbReference>
<dbReference type="PROSITE" id="PS51194">
    <property type="entry name" value="HELICASE_CTER"/>
    <property type="match status" value="1"/>
</dbReference>
<dbReference type="PROSITE" id="PS51195">
    <property type="entry name" value="Q_MOTIF"/>
    <property type="match status" value="1"/>
</dbReference>
<sequence length="765" mass="84828">MSAFEDLGVLPEIIKAIEELDWLLPTPIQTEAIPLILGGGDVLAAAETGSGKTGAFALPILQITYETLNKKAEIPIIAPTNTSGEDGTSGGGGGGGGGDTIELDQIDRDKNMAVDGLICQSRSSDWCGIKATKGISSGKFYYESIVRDEGLCRIGFALKKSSRNIGTDKFSWGYGGTGKKSHESKFIDYGKPFGNNDVIGCYINFDEEIIGFTKNGQDFGEAFTFNSKAGIFYPALVLKNAEMEFNFGSKPMKHDLKGYKPINQAELLIDQQTSTQIDNSKNNNNNNNKKGSGNNKKNKGKDDDKMNDEDNNNKQPRKTLSLIIEPTRELADQAYSAILNFSKYLDSPKIQVSLCIGGEKSNGGRNKIEGDIIIGTPGRLESLVKEGSIDLSSIKFFVLDEADQLIDDNLAIVNFIYNKLPIGQNLQVLFFSATLHSTKVIKFCEQITKNPTWVDLKGRDFIPDLITHAYVKADPIKFESLWRNSENPLRIRTDGVHASDVQQFGKLKEPEQKSEAIKLLKAQLLLKCIQSFKMDQAIIFARTRLDCDHIHQFLKDAGGGNTSGLEGEFSSTVLHGGDNISRARKDNLEKFRNGDVRFLICTDVAARGIDIRGLPYMINYTLPESFEDYIHRVGRVGRSDRIGLAISLVAYEQEKVWYHTCRDKGKGCHNTKLTENGGCCIWYDEPQLFTAIQENIGPIELDSDFQLPKDMKQLNFGGSTKLTGASADYKPHTEELRSRVLQLSQLEETIQIDYLTLPKRIIKLK</sequence>